<gene>
    <name evidence="3" type="ordered locus">Rv2250A</name>
</gene>
<proteinExistence type="evidence at protein level"/>
<keyword id="KW-0903">Direct protein sequencing</keyword>
<keyword id="KW-1185">Reference proteome</keyword>
<dbReference type="EMBL" id="AL123456">
    <property type="protein sequence ID" value="CCP45031.1"/>
    <property type="status" value="ALT_INIT"/>
    <property type="molecule type" value="Genomic_DNA"/>
</dbReference>
<dbReference type="SMR" id="L0TBY6"/>
<dbReference type="STRING" id="83332.Rv2250A"/>
<dbReference type="PaxDb" id="83332-Rv2250A"/>
<dbReference type="TubercuList" id="Rv2250A"/>
<dbReference type="eggNOG" id="COG0277">
    <property type="taxonomic scope" value="Bacteria"/>
</dbReference>
<dbReference type="InParanoid" id="L0TBY6"/>
<dbReference type="Proteomes" id="UP000001584">
    <property type="component" value="Chromosome"/>
</dbReference>
<sequence length="149" mass="16663">MTHREELLPPMKWDAWGDPAAAKPLSDGVRSLLKQVVGLADSEQPELDPAQVQLRPSALSGADHDALARIVGTEYFRTADRDRLLHAGGKSTPDLLRRKDTGVQDAPDAVLLPGGPNGGGRRRRHLALLLRPRHCRGPVWWRHQRRWWA</sequence>
<name>2250A_MYCTU</name>
<protein>
    <recommendedName>
        <fullName evidence="2">Protein Rv2250A</fullName>
    </recommendedName>
</protein>
<evidence type="ECO:0000269" key="1">
    <source>
    </source>
</evidence>
<evidence type="ECO:0000305" key="2"/>
<evidence type="ECO:0000312" key="3">
    <source>
        <dbReference type="EMBL" id="CCP45031.1"/>
    </source>
</evidence>
<evidence type="ECO:0007744" key="4">
    <source>
    </source>
</evidence>
<feature type="initiator methionine" description="Removed" evidence="1">
    <location>
        <position position="1"/>
    </location>
</feature>
<feature type="chain" id="PRO_0000457298" description="Protein Rv2250A">
    <location>
        <begin position="2"/>
        <end position="149"/>
    </location>
</feature>
<reference evidence="3" key="1">
    <citation type="journal article" date="1998" name="Nature">
        <title>Deciphering the biology of Mycobacterium tuberculosis from the complete genome sequence.</title>
        <authorList>
            <person name="Cole S.T."/>
            <person name="Brosch R."/>
            <person name="Parkhill J."/>
            <person name="Garnier T."/>
            <person name="Churcher C.M."/>
            <person name="Harris D.E."/>
            <person name="Gordon S.V."/>
            <person name="Eiglmeier K."/>
            <person name="Gas S."/>
            <person name="Barry C.E. III"/>
            <person name="Tekaia F."/>
            <person name="Badcock K."/>
            <person name="Basham D."/>
            <person name="Brown D."/>
            <person name="Chillingworth T."/>
            <person name="Connor R."/>
            <person name="Davies R.M."/>
            <person name="Devlin K."/>
            <person name="Feltwell T."/>
            <person name="Gentles S."/>
            <person name="Hamlin N."/>
            <person name="Holroyd S."/>
            <person name="Hornsby T."/>
            <person name="Jagels K."/>
            <person name="Krogh A."/>
            <person name="McLean J."/>
            <person name="Moule S."/>
            <person name="Murphy L.D."/>
            <person name="Oliver S."/>
            <person name="Osborne J."/>
            <person name="Quail M.A."/>
            <person name="Rajandream M.A."/>
            <person name="Rogers J."/>
            <person name="Rutter S."/>
            <person name="Seeger K."/>
            <person name="Skelton S."/>
            <person name="Squares S."/>
            <person name="Squares R."/>
            <person name="Sulston J.E."/>
            <person name="Taylor K."/>
            <person name="Whitehead S."/>
            <person name="Barrell B.G."/>
        </authorList>
    </citation>
    <scope>NUCLEOTIDE SEQUENCE [LARGE SCALE GENOMIC DNA]</scope>
    <source>
        <strain>ATCC 25618 / H37Rv</strain>
    </source>
</reference>
<reference key="2">
    <citation type="journal article" date="2022" name="Genomics">
        <title>Deep N-terminomics of Mycobacterium tuberculosis H37Rv extensively correct annotated encoding genes.</title>
        <authorList>
            <person name="Shi J."/>
            <person name="Meng S."/>
            <person name="Wan L."/>
            <person name="Zhang Z."/>
            <person name="Jiang S."/>
            <person name="Zhu H."/>
            <person name="Dai E."/>
            <person name="Chang L."/>
            <person name="Gao H."/>
            <person name="Wan K."/>
            <person name="Zhang L."/>
            <person name="Zhao X."/>
            <person name="Liu H."/>
            <person name="Lyu Z."/>
            <person name="Zhang Y."/>
            <person name="Xu P."/>
        </authorList>
    </citation>
    <scope>PROTEIN SEQUENCE OF 2-30</scope>
    <scope>SEQUENCE REVISION TO N-TERMINUS</scope>
    <source>
        <strain>H37Rv</strain>
    </source>
</reference>
<reference evidence="4" key="3">
    <citation type="journal article" date="2011" name="Mol. Cell. Proteomics">
        <title>Proteogenomic analysis of Mycobacterium tuberculosis by high resolution mass spectrometry.</title>
        <authorList>
            <person name="Kelkar D.S."/>
            <person name="Kumar D."/>
            <person name="Kumar P."/>
            <person name="Balakrishnan L."/>
            <person name="Muthusamy B."/>
            <person name="Yadav A.K."/>
            <person name="Shrivastava P."/>
            <person name="Marimuthu A."/>
            <person name="Anand S."/>
            <person name="Sundaram H."/>
            <person name="Kingsbury R."/>
            <person name="Harsha H.C."/>
            <person name="Nair B."/>
            <person name="Prasad T.S."/>
            <person name="Chauhan D.S."/>
            <person name="Katoch K."/>
            <person name="Katoch V.M."/>
            <person name="Kumar P."/>
            <person name="Chaerkady R."/>
            <person name="Ramachandran S."/>
            <person name="Dash D."/>
            <person name="Pandey A."/>
        </authorList>
    </citation>
    <scope>IDENTIFICATION BY MASS SPECTROMETRY [LARGE SCALE ANALYSIS]</scope>
    <source>
        <strain>ATCC 25618 / H37Rv</strain>
    </source>
</reference>
<accession>L0TBY6</accession>
<comment type="sequence caution" evidence="1">
    <conflict type="erroneous initiation">
        <sequence resource="EMBL-CDS" id="CCP45031"/>
    </conflict>
    <text>Truncated N-terminus.</text>
</comment>
<organism>
    <name type="scientific">Mycobacterium tuberculosis (strain ATCC 25618 / H37Rv)</name>
    <dbReference type="NCBI Taxonomy" id="83332"/>
    <lineage>
        <taxon>Bacteria</taxon>
        <taxon>Bacillati</taxon>
        <taxon>Actinomycetota</taxon>
        <taxon>Actinomycetes</taxon>
        <taxon>Mycobacteriales</taxon>
        <taxon>Mycobacteriaceae</taxon>
        <taxon>Mycobacterium</taxon>
        <taxon>Mycobacterium tuberculosis complex</taxon>
    </lineage>
</organism>